<dbReference type="EMBL" id="EF445085">
    <property type="protein sequence ID" value="ABR21060.1"/>
    <property type="molecule type" value="mRNA"/>
</dbReference>
<dbReference type="GO" id="GO:0005576">
    <property type="term" value="C:extracellular region"/>
    <property type="evidence" value="ECO:0007669"/>
    <property type="project" value="UniProtKB-SubCell"/>
</dbReference>
<dbReference type="GO" id="GO:0008200">
    <property type="term" value="F:ion channel inhibitor activity"/>
    <property type="evidence" value="ECO:0007669"/>
    <property type="project" value="InterPro"/>
</dbReference>
<dbReference type="GO" id="GO:0015459">
    <property type="term" value="F:potassium channel regulator activity"/>
    <property type="evidence" value="ECO:0007669"/>
    <property type="project" value="UniProtKB-KW"/>
</dbReference>
<dbReference type="GO" id="GO:0090729">
    <property type="term" value="F:toxin activity"/>
    <property type="evidence" value="ECO:0007669"/>
    <property type="project" value="UniProtKB-KW"/>
</dbReference>
<dbReference type="InterPro" id="IPR036574">
    <property type="entry name" value="Scorpion_toxin-like_sf"/>
</dbReference>
<dbReference type="InterPro" id="IPR008911">
    <property type="entry name" value="Toxin_alpha-KTx_8/9"/>
</dbReference>
<dbReference type="Pfam" id="PF05453">
    <property type="entry name" value="Toxin_6"/>
    <property type="match status" value="1"/>
</dbReference>
<dbReference type="SUPFAM" id="SSF57095">
    <property type="entry name" value="Scorpion toxin-like"/>
    <property type="match status" value="1"/>
</dbReference>
<name>KAX8R_MESEU</name>
<sequence>MSRLYAIILIALVFNVIMTIMPDMKVEAVSCEDCPEHCATKDQRAKCDNDRCVCEPK</sequence>
<proteinExistence type="inferred from homology"/>
<organism>
    <name type="scientific">Mesobuthus eupeus</name>
    <name type="common">Lesser Asian scorpion</name>
    <name type="synonym">Buthus eupeus</name>
    <dbReference type="NCBI Taxonomy" id="34648"/>
    <lineage>
        <taxon>Eukaryota</taxon>
        <taxon>Metazoa</taxon>
        <taxon>Ecdysozoa</taxon>
        <taxon>Arthropoda</taxon>
        <taxon>Chelicerata</taxon>
        <taxon>Arachnida</taxon>
        <taxon>Scorpiones</taxon>
        <taxon>Buthida</taxon>
        <taxon>Buthoidea</taxon>
        <taxon>Buthidae</taxon>
        <taxon>Mesobuthus</taxon>
    </lineage>
</organism>
<evidence type="ECO:0000250" key="1">
    <source>
        <dbReference type="UniProtKB" id="P86400"/>
    </source>
</evidence>
<evidence type="ECO:0000250" key="2">
    <source>
        <dbReference type="UniProtKB" id="Q9U8D2"/>
    </source>
</evidence>
<evidence type="ECO:0000255" key="3"/>
<evidence type="ECO:0000303" key="4">
    <source>
    </source>
</evidence>
<evidence type="ECO:0000305" key="5">
    <source>
    </source>
</evidence>
<feature type="signal peptide" evidence="3">
    <location>
        <begin position="1"/>
        <end position="19"/>
    </location>
</feature>
<feature type="propeptide" id="PRO_0000442924" evidence="1">
    <location>
        <begin position="20"/>
        <end position="28"/>
    </location>
</feature>
<feature type="peptide" id="PRO_5003191278" description="Potassium channel toxin MeuTXKalpha2" evidence="1">
    <location>
        <begin position="29"/>
        <end position="57"/>
    </location>
</feature>
<feature type="disulfide bond" evidence="2">
    <location>
        <begin position="31"/>
        <end position="47"/>
    </location>
</feature>
<feature type="disulfide bond" evidence="2">
    <location>
        <begin position="34"/>
        <end position="52"/>
    </location>
</feature>
<feature type="disulfide bond" evidence="2">
    <location>
        <begin position="38"/>
        <end position="54"/>
    </location>
</feature>
<accession>E4VP43</accession>
<protein>
    <recommendedName>
        <fullName evidence="4">Potassium channel toxin MeuTXKalpha2</fullName>
    </recommendedName>
</protein>
<comment type="function">
    <text evidence="1">Inhibits Kv1.1/KCNA1, Kv1.3/KCNA3 and Shaker potassium channels.</text>
</comment>
<comment type="subcellular location">
    <subcellularLocation>
        <location evidence="1">Secreted</location>
    </subcellularLocation>
</comment>
<comment type="tissue specificity">
    <text evidence="5">Expressed by the venom gland.</text>
</comment>
<comment type="domain">
    <text evidence="2">Has the structural arrangement of an alpha-helix connected to a beta-sheet by disulfide bonds (CSalpha/beta).</text>
</comment>
<comment type="similarity">
    <text evidence="3">Belongs to the short scorpion toxin superfamily. Potassium channel inhibitor family. Alpha-KTx 08 subfamily.</text>
</comment>
<keyword id="KW-1015">Disulfide bond</keyword>
<keyword id="KW-0872">Ion channel impairing toxin</keyword>
<keyword id="KW-0528">Neurotoxin</keyword>
<keyword id="KW-0632">Potassium channel impairing toxin</keyword>
<keyword id="KW-0964">Secreted</keyword>
<keyword id="KW-0732">Signal</keyword>
<keyword id="KW-0800">Toxin</keyword>
<keyword id="KW-1220">Voltage-gated potassium channel impairing toxin</keyword>
<reference key="1">
    <citation type="journal article" date="2011" name="Mol. Cell. Proteomics">
        <title>Molecular diversity and functional evolution of scorpion potassium channel toxins.</title>
        <authorList>
            <person name="Zhu S."/>
            <person name="Peigneur S."/>
            <person name="Gao B."/>
            <person name="Luo L."/>
            <person name="Jin D."/>
            <person name="Zhao Y."/>
            <person name="Tytgat J."/>
        </authorList>
    </citation>
    <scope>NUCLEOTIDE SEQUENCE [MRNA]</scope>
    <source>
        <tissue>Venom gland</tissue>
    </source>
</reference>